<organism>
    <name type="scientific">Shigella flexneri serotype 5b (strain 8401)</name>
    <dbReference type="NCBI Taxonomy" id="373384"/>
    <lineage>
        <taxon>Bacteria</taxon>
        <taxon>Pseudomonadati</taxon>
        <taxon>Pseudomonadota</taxon>
        <taxon>Gammaproteobacteria</taxon>
        <taxon>Enterobacterales</taxon>
        <taxon>Enterobacteriaceae</taxon>
        <taxon>Shigella</taxon>
    </lineage>
</organism>
<reference key="1">
    <citation type="journal article" date="2006" name="BMC Genomics">
        <title>Complete genome sequence of Shigella flexneri 5b and comparison with Shigella flexneri 2a.</title>
        <authorList>
            <person name="Nie H."/>
            <person name="Yang F."/>
            <person name="Zhang X."/>
            <person name="Yang J."/>
            <person name="Chen L."/>
            <person name="Wang J."/>
            <person name="Xiong Z."/>
            <person name="Peng J."/>
            <person name="Sun L."/>
            <person name="Dong J."/>
            <person name="Xue Y."/>
            <person name="Xu X."/>
            <person name="Chen S."/>
            <person name="Yao Z."/>
            <person name="Shen Y."/>
            <person name="Jin Q."/>
        </authorList>
    </citation>
    <scope>NUCLEOTIDE SEQUENCE [LARGE SCALE GENOMIC DNA]</scope>
    <source>
        <strain>8401</strain>
    </source>
</reference>
<feature type="chain" id="PRO_0000316897" description="HTH-type transcriptional activator RhaR">
    <location>
        <begin position="1"/>
        <end position="282"/>
    </location>
</feature>
<feature type="domain" description="HTH araC/xylS-type" evidence="1">
    <location>
        <begin position="179"/>
        <end position="277"/>
    </location>
</feature>
<feature type="DNA-binding region" description="H-T-H motif" evidence="1">
    <location>
        <begin position="196"/>
        <end position="217"/>
    </location>
</feature>
<feature type="DNA-binding region" description="H-T-H motif" evidence="1">
    <location>
        <begin position="244"/>
        <end position="267"/>
    </location>
</feature>
<feature type="site" description="Interaction with sigma-70" evidence="1">
    <location>
        <position position="246"/>
    </location>
</feature>
<evidence type="ECO:0000255" key="1">
    <source>
        <dbReference type="HAMAP-Rule" id="MF_01533"/>
    </source>
</evidence>
<evidence type="ECO:0000305" key="2"/>
<accession>Q0SZ96</accession>
<comment type="function">
    <text evidence="1">Activates expression of the rhaSR operon in response to L-rhamnose.</text>
</comment>
<comment type="subunit">
    <text evidence="1">Binds DNA as a dimer.</text>
</comment>
<comment type="subcellular location">
    <subcellularLocation>
        <location evidence="1">Cytoplasm</location>
    </subcellularLocation>
</comment>
<comment type="sequence caution" evidence="2">
    <conflict type="erroneous initiation">
        <sequence resource="EMBL-CDS" id="ABF05619"/>
    </conflict>
    <text>Extended N-terminus.</text>
</comment>
<comment type="sequence caution" evidence="2">
    <conflict type="erroneous termination">
        <sequence resource="EMBL-CDS" id="ABF05619"/>
    </conflict>
    <text>Truncated C-terminus.</text>
</comment>
<protein>
    <recommendedName>
        <fullName evidence="1">HTH-type transcriptional activator RhaR</fullName>
    </recommendedName>
    <alternativeName>
        <fullName evidence="1">L-rhamnose operon transcriptional activator RhaR</fullName>
    </alternativeName>
</protein>
<name>RHAR_SHIF8</name>
<gene>
    <name evidence="1" type="primary">rhaR</name>
    <name type="ordered locus">SFV_3589</name>
</gene>
<proteinExistence type="inferred from homology"/>
<dbReference type="EMBL" id="CP000266">
    <property type="protein sequence ID" value="ABF05619.1"/>
    <property type="status" value="ALT_SEQ"/>
    <property type="molecule type" value="Genomic_DNA"/>
</dbReference>
<dbReference type="SMR" id="Q0SZ96"/>
<dbReference type="KEGG" id="sfv:SFV_3589"/>
<dbReference type="HOGENOM" id="CLU_000445_88_5_6"/>
<dbReference type="Proteomes" id="UP000000659">
    <property type="component" value="Chromosome"/>
</dbReference>
<dbReference type="GO" id="GO:0005737">
    <property type="term" value="C:cytoplasm"/>
    <property type="evidence" value="ECO:0007669"/>
    <property type="project" value="UniProtKB-SubCell"/>
</dbReference>
<dbReference type="GO" id="GO:0003700">
    <property type="term" value="F:DNA-binding transcription factor activity"/>
    <property type="evidence" value="ECO:0007669"/>
    <property type="project" value="UniProtKB-UniRule"/>
</dbReference>
<dbReference type="GO" id="GO:0043565">
    <property type="term" value="F:sequence-specific DNA binding"/>
    <property type="evidence" value="ECO:0007669"/>
    <property type="project" value="InterPro"/>
</dbReference>
<dbReference type="GO" id="GO:0045893">
    <property type="term" value="P:positive regulation of DNA-templated transcription"/>
    <property type="evidence" value="ECO:0007669"/>
    <property type="project" value="UniProtKB-UniRule"/>
</dbReference>
<dbReference type="GO" id="GO:0019299">
    <property type="term" value="P:rhamnose metabolic process"/>
    <property type="evidence" value="ECO:0007669"/>
    <property type="project" value="UniProtKB-UniRule"/>
</dbReference>
<dbReference type="CDD" id="cd06977">
    <property type="entry name" value="cupin_RhaR_RhaS-like_N"/>
    <property type="match status" value="1"/>
</dbReference>
<dbReference type="Gene3D" id="1.10.10.60">
    <property type="entry name" value="Homeodomain-like"/>
    <property type="match status" value="2"/>
</dbReference>
<dbReference type="Gene3D" id="2.60.120.10">
    <property type="entry name" value="Jelly Rolls"/>
    <property type="match status" value="1"/>
</dbReference>
<dbReference type="HAMAP" id="MF_01533">
    <property type="entry name" value="HTH_type_RhaR"/>
    <property type="match status" value="1"/>
</dbReference>
<dbReference type="InterPro" id="IPR003313">
    <property type="entry name" value="AraC-bd"/>
</dbReference>
<dbReference type="InterPro" id="IPR009057">
    <property type="entry name" value="Homeodomain-like_sf"/>
</dbReference>
<dbReference type="InterPro" id="IPR018060">
    <property type="entry name" value="HTH_AraC"/>
</dbReference>
<dbReference type="InterPro" id="IPR018062">
    <property type="entry name" value="HTH_AraC-typ_CS"/>
</dbReference>
<dbReference type="InterPro" id="IPR047220">
    <property type="entry name" value="RhaR_RhaS-like_N"/>
</dbReference>
<dbReference type="InterPro" id="IPR014710">
    <property type="entry name" value="RmlC-like_jellyroll"/>
</dbReference>
<dbReference type="InterPro" id="IPR011051">
    <property type="entry name" value="RmlC_Cupin_sf"/>
</dbReference>
<dbReference type="InterPro" id="IPR023699">
    <property type="entry name" value="Tscrpt_act_RhaR"/>
</dbReference>
<dbReference type="InterPro" id="IPR020449">
    <property type="entry name" value="Tscrpt_reg_AraC-type_HTH"/>
</dbReference>
<dbReference type="NCBIfam" id="NF010025">
    <property type="entry name" value="PRK13500.1"/>
    <property type="match status" value="1"/>
</dbReference>
<dbReference type="NCBIfam" id="NF010026">
    <property type="entry name" value="PRK13501.1"/>
    <property type="match status" value="1"/>
</dbReference>
<dbReference type="NCBIfam" id="NF010027">
    <property type="entry name" value="PRK13502.1"/>
    <property type="match status" value="1"/>
</dbReference>
<dbReference type="PANTHER" id="PTHR43280">
    <property type="entry name" value="ARAC-FAMILY TRANSCRIPTIONAL REGULATOR"/>
    <property type="match status" value="1"/>
</dbReference>
<dbReference type="PANTHER" id="PTHR43280:SF13">
    <property type="entry name" value="HTH-TYPE TRANSCRIPTIONAL ACTIVATOR RHAR"/>
    <property type="match status" value="1"/>
</dbReference>
<dbReference type="Pfam" id="PF02311">
    <property type="entry name" value="AraC_binding"/>
    <property type="match status" value="1"/>
</dbReference>
<dbReference type="Pfam" id="PF12833">
    <property type="entry name" value="HTH_18"/>
    <property type="match status" value="1"/>
</dbReference>
<dbReference type="PRINTS" id="PR00032">
    <property type="entry name" value="HTHARAC"/>
</dbReference>
<dbReference type="SMART" id="SM00342">
    <property type="entry name" value="HTH_ARAC"/>
    <property type="match status" value="1"/>
</dbReference>
<dbReference type="SUPFAM" id="SSF46689">
    <property type="entry name" value="Homeodomain-like"/>
    <property type="match status" value="2"/>
</dbReference>
<dbReference type="SUPFAM" id="SSF51182">
    <property type="entry name" value="RmlC-like cupins"/>
    <property type="match status" value="1"/>
</dbReference>
<dbReference type="PROSITE" id="PS00041">
    <property type="entry name" value="HTH_ARAC_FAMILY_1"/>
    <property type="match status" value="1"/>
</dbReference>
<dbReference type="PROSITE" id="PS01124">
    <property type="entry name" value="HTH_ARAC_FAMILY_2"/>
    <property type="match status" value="1"/>
</dbReference>
<sequence length="282" mass="32314">MAHQLKLLKDDFFASDQQAVAVADRYPQDVFAEHTHDFCELVIVWRGNGLHVLNDRPYRITRGDLFYIHADDKHSYASVNDLVLQNIIYCPERLKLNLDWQGAIPGFSASAGQPHWRLGSVGMAQARQVIGQLEHESSQHVPFANEMAELLFGQLVMLLNRHRYTSDSLPPTSSETLLDKLITRLAASLKSPFALDKFCDEASCSERVLRQQFRQQTGMTINQYLRQVRVCHAQYLLQHSRLLISDISTECGFEDSNYFSVVFTRETGMTPSQWRHLNSQKD</sequence>
<keyword id="KW-0010">Activator</keyword>
<keyword id="KW-0963">Cytoplasm</keyword>
<keyword id="KW-0238">DNA-binding</keyword>
<keyword id="KW-0677">Repeat</keyword>
<keyword id="KW-0684">Rhamnose metabolism</keyword>
<keyword id="KW-0804">Transcription</keyword>
<keyword id="KW-0805">Transcription regulation</keyword>